<name>TRM1_PYRHO</name>
<evidence type="ECO:0000255" key="1">
    <source>
        <dbReference type="HAMAP-Rule" id="MF_00290"/>
    </source>
</evidence>
<evidence type="ECO:0007829" key="2">
    <source>
        <dbReference type="PDB" id="2DUL"/>
    </source>
</evidence>
<evidence type="ECO:0007829" key="3">
    <source>
        <dbReference type="PDB" id="2YTZ"/>
    </source>
</evidence>
<protein>
    <recommendedName>
        <fullName evidence="1">tRNA (guanine(26)-N(2))-dimethyltransferase</fullName>
        <ecNumber evidence="1">2.1.1.216</ecNumber>
    </recommendedName>
    <alternativeName>
        <fullName evidence="1">tRNA 2,2-dimethylguanosine-26 methyltransferase</fullName>
    </alternativeName>
    <alternativeName>
        <fullName evidence="1">tRNA(guanine-26,N(2)-N(2)) methyltransferase</fullName>
    </alternativeName>
    <alternativeName>
        <fullName evidence="1">tRNA(m(2,2)G26)dimethyltransferase</fullName>
    </alternativeName>
</protein>
<gene>
    <name evidence="1" type="primary">trm1</name>
    <name type="ordered locus">PH1829</name>
</gene>
<proteinExistence type="evidence at protein level"/>
<comment type="function">
    <text evidence="1">Dimethylates a single guanine residue at position 26 of a number of tRNAs using S-adenosyl-L-methionine as donor of the methyl groups.</text>
</comment>
<comment type="catalytic activity">
    <reaction evidence="1">
        <text>guanosine(26) in tRNA + 2 S-adenosyl-L-methionine = N(2)-dimethylguanosine(26) in tRNA + 2 S-adenosyl-L-homocysteine + 2 H(+)</text>
        <dbReference type="Rhea" id="RHEA:43140"/>
        <dbReference type="Rhea" id="RHEA-COMP:10359"/>
        <dbReference type="Rhea" id="RHEA-COMP:10360"/>
        <dbReference type="ChEBI" id="CHEBI:15378"/>
        <dbReference type="ChEBI" id="CHEBI:57856"/>
        <dbReference type="ChEBI" id="CHEBI:59789"/>
        <dbReference type="ChEBI" id="CHEBI:74269"/>
        <dbReference type="ChEBI" id="CHEBI:74513"/>
        <dbReference type="EC" id="2.1.1.216"/>
    </reaction>
</comment>
<comment type="similarity">
    <text evidence="1">Belongs to the class I-like SAM-binding methyltransferase superfamily. Trm1 family.</text>
</comment>
<feature type="chain" id="PRO_0000147690" description="tRNA (guanine(26)-N(2))-dimethyltransferase">
    <location>
        <begin position="1"/>
        <end position="381"/>
    </location>
</feature>
<feature type="domain" description="Trm1 methyltransferase" evidence="1">
    <location>
        <begin position="7"/>
        <end position="378"/>
    </location>
</feature>
<feature type="binding site" evidence="1">
    <location>
        <position position="39"/>
    </location>
    <ligand>
        <name>S-adenosyl-L-methionine</name>
        <dbReference type="ChEBI" id="CHEBI:59789"/>
    </ligand>
</feature>
<feature type="binding site" evidence="1">
    <location>
        <position position="64"/>
    </location>
    <ligand>
        <name>S-adenosyl-L-methionine</name>
        <dbReference type="ChEBI" id="CHEBI:59789"/>
    </ligand>
</feature>
<feature type="binding site" evidence="1">
    <location>
        <position position="81"/>
    </location>
    <ligand>
        <name>S-adenosyl-L-methionine</name>
        <dbReference type="ChEBI" id="CHEBI:59789"/>
    </ligand>
</feature>
<feature type="binding site" evidence="1">
    <location>
        <position position="123"/>
    </location>
    <ligand>
        <name>S-adenosyl-L-methionine</name>
        <dbReference type="ChEBI" id="CHEBI:59789"/>
    </ligand>
</feature>
<feature type="binding site" evidence="1">
    <location>
        <position position="124"/>
    </location>
    <ligand>
        <name>S-adenosyl-L-methionine</name>
        <dbReference type="ChEBI" id="CHEBI:59789"/>
    </ligand>
</feature>
<feature type="strand" evidence="2">
    <location>
        <begin position="7"/>
        <end position="11"/>
    </location>
</feature>
<feature type="strand" evidence="2">
    <location>
        <begin position="14"/>
        <end position="18"/>
    </location>
</feature>
<feature type="turn" evidence="3">
    <location>
        <begin position="24"/>
        <end position="26"/>
    </location>
</feature>
<feature type="strand" evidence="3">
    <location>
        <begin position="27"/>
        <end position="29"/>
    </location>
</feature>
<feature type="helix" evidence="2">
    <location>
        <begin position="33"/>
        <end position="35"/>
    </location>
</feature>
<feature type="helix" evidence="2">
    <location>
        <begin position="36"/>
        <end position="49"/>
    </location>
</feature>
<feature type="strand" evidence="2">
    <location>
        <begin position="52"/>
        <end position="58"/>
    </location>
</feature>
<feature type="helix" evidence="2">
    <location>
        <begin position="63"/>
        <end position="71"/>
    </location>
</feature>
<feature type="strand" evidence="2">
    <location>
        <begin position="75"/>
        <end position="82"/>
    </location>
</feature>
<feature type="helix" evidence="2">
    <location>
        <begin position="84"/>
        <end position="97"/>
    </location>
</feature>
<feature type="strand" evidence="3">
    <location>
        <begin position="103"/>
        <end position="105"/>
    </location>
</feature>
<feature type="strand" evidence="2">
    <location>
        <begin position="106"/>
        <end position="122"/>
    </location>
</feature>
<feature type="helix" evidence="2">
    <location>
        <begin position="124"/>
        <end position="130"/>
    </location>
</feature>
<feature type="strand" evidence="2">
    <location>
        <begin position="135"/>
        <end position="140"/>
    </location>
</feature>
<feature type="helix" evidence="2">
    <location>
        <begin position="147"/>
        <end position="156"/>
    </location>
</feature>
<feature type="strand" evidence="2">
    <location>
        <begin position="157"/>
        <end position="167"/>
    </location>
</feature>
<feature type="helix" evidence="2">
    <location>
        <begin position="170"/>
        <end position="173"/>
    </location>
</feature>
<feature type="helix" evidence="2">
    <location>
        <begin position="178"/>
        <end position="185"/>
    </location>
</feature>
<feature type="strand" evidence="2">
    <location>
        <begin position="186"/>
        <end position="188"/>
    </location>
</feature>
<feature type="helix" evidence="2">
    <location>
        <begin position="195"/>
        <end position="212"/>
    </location>
</feature>
<feature type="turn" evidence="2">
    <location>
        <begin position="213"/>
        <end position="215"/>
    </location>
</feature>
<feature type="strand" evidence="2">
    <location>
        <begin position="216"/>
        <end position="226"/>
    </location>
</feature>
<feature type="strand" evidence="2">
    <location>
        <begin position="229"/>
        <end position="239"/>
    </location>
</feature>
<feature type="helix" evidence="2">
    <location>
        <begin position="240"/>
        <end position="247"/>
    </location>
</feature>
<feature type="strand" evidence="2">
    <location>
        <begin position="250"/>
        <end position="255"/>
    </location>
</feature>
<feature type="turn" evidence="2">
    <location>
        <begin position="257"/>
        <end position="259"/>
    </location>
</feature>
<feature type="strand" evidence="2">
    <location>
        <begin position="262"/>
        <end position="269"/>
    </location>
</feature>
<feature type="strand" evidence="2">
    <location>
        <begin position="272"/>
        <end position="274"/>
    </location>
</feature>
<feature type="strand" evidence="2">
    <location>
        <begin position="276"/>
        <end position="280"/>
    </location>
</feature>
<feature type="helix" evidence="2">
    <location>
        <begin position="287"/>
        <end position="298"/>
    </location>
</feature>
<feature type="helix" evidence="2">
    <location>
        <begin position="305"/>
        <end position="317"/>
    </location>
</feature>
<feature type="helix" evidence="2">
    <location>
        <begin position="327"/>
        <end position="334"/>
    </location>
</feature>
<feature type="helix" evidence="2">
    <location>
        <begin position="341"/>
        <end position="350"/>
    </location>
</feature>
<feature type="strand" evidence="2">
    <location>
        <begin position="355"/>
        <end position="358"/>
    </location>
</feature>
<feature type="strand" evidence="2">
    <location>
        <begin position="361"/>
        <end position="369"/>
    </location>
</feature>
<feature type="helix" evidence="2">
    <location>
        <begin position="371"/>
        <end position="378"/>
    </location>
</feature>
<reference key="1">
    <citation type="journal article" date="1998" name="DNA Res.">
        <title>Complete sequence and gene organization of the genome of a hyper-thermophilic archaebacterium, Pyrococcus horikoshii OT3.</title>
        <authorList>
            <person name="Kawarabayasi Y."/>
            <person name="Sawada M."/>
            <person name="Horikawa H."/>
            <person name="Haikawa Y."/>
            <person name="Hino Y."/>
            <person name="Yamamoto S."/>
            <person name="Sekine M."/>
            <person name="Baba S."/>
            <person name="Kosugi H."/>
            <person name="Hosoyama A."/>
            <person name="Nagai Y."/>
            <person name="Sakai M."/>
            <person name="Ogura K."/>
            <person name="Otsuka R."/>
            <person name="Nakazawa H."/>
            <person name="Takamiya M."/>
            <person name="Ohfuku Y."/>
            <person name="Funahashi T."/>
            <person name="Tanaka T."/>
            <person name="Kudoh Y."/>
            <person name="Yamazaki J."/>
            <person name="Kushida N."/>
            <person name="Oguchi A."/>
            <person name="Aoki K."/>
            <person name="Yoshizawa T."/>
            <person name="Nakamura Y."/>
            <person name="Robb F.T."/>
            <person name="Horikoshi K."/>
            <person name="Masuchi Y."/>
            <person name="Shizuya H."/>
            <person name="Kikuchi H."/>
        </authorList>
    </citation>
    <scope>NUCLEOTIDE SEQUENCE [LARGE SCALE GENOMIC DNA]</scope>
    <source>
        <strain>ATCC 700860 / DSM 12428 / JCM 9974 / NBRC 100139 / OT-3</strain>
    </source>
</reference>
<accession>O59493</accession>
<dbReference type="EC" id="2.1.1.216" evidence="1"/>
<dbReference type="EMBL" id="BA000001">
    <property type="protein sequence ID" value="BAA30948.1"/>
    <property type="molecule type" value="Genomic_DNA"/>
</dbReference>
<dbReference type="PIR" id="E71194">
    <property type="entry name" value="E71194"/>
</dbReference>
<dbReference type="PDB" id="2DUL">
    <property type="method" value="X-ray"/>
    <property type="resolution" value="1.90 A"/>
    <property type="chains" value="A=4-381"/>
</dbReference>
<dbReference type="PDB" id="2EJT">
    <property type="method" value="X-ray"/>
    <property type="resolution" value="2.20 A"/>
    <property type="chains" value="A=4-381"/>
</dbReference>
<dbReference type="PDB" id="2EJU">
    <property type="method" value="X-ray"/>
    <property type="resolution" value="1.95 A"/>
    <property type="chains" value="A=4-381"/>
</dbReference>
<dbReference type="PDB" id="2YTZ">
    <property type="method" value="X-ray"/>
    <property type="resolution" value="2.65 A"/>
    <property type="chains" value="A/B=4-381"/>
</dbReference>
<dbReference type="PDBsum" id="2DUL"/>
<dbReference type="PDBsum" id="2EJT"/>
<dbReference type="PDBsum" id="2EJU"/>
<dbReference type="PDBsum" id="2YTZ"/>
<dbReference type="SMR" id="O59493"/>
<dbReference type="STRING" id="70601.gene:9378831"/>
<dbReference type="EnsemblBacteria" id="BAA30948">
    <property type="protein sequence ID" value="BAA30948"/>
    <property type="gene ID" value="BAA30948"/>
</dbReference>
<dbReference type="KEGG" id="pho:PH1829"/>
<dbReference type="eggNOG" id="arCOG01219">
    <property type="taxonomic scope" value="Archaea"/>
</dbReference>
<dbReference type="BRENDA" id="2.1.1.216">
    <property type="organism ID" value="5244"/>
</dbReference>
<dbReference type="EvolutionaryTrace" id="O59493"/>
<dbReference type="Proteomes" id="UP000000752">
    <property type="component" value="Chromosome"/>
</dbReference>
<dbReference type="GO" id="GO:0160104">
    <property type="term" value="F:tRNA (guanine(26)-N2)-dimethyltransferase activity"/>
    <property type="evidence" value="ECO:0007669"/>
    <property type="project" value="UniProtKB-UniRule"/>
</dbReference>
<dbReference type="GO" id="GO:0000049">
    <property type="term" value="F:tRNA binding"/>
    <property type="evidence" value="ECO:0007669"/>
    <property type="project" value="UniProtKB-KW"/>
</dbReference>
<dbReference type="GO" id="GO:0002940">
    <property type="term" value="P:tRNA N2-guanine methylation"/>
    <property type="evidence" value="ECO:0007669"/>
    <property type="project" value="TreeGrafter"/>
</dbReference>
<dbReference type="CDD" id="cd02440">
    <property type="entry name" value="AdoMet_MTases"/>
    <property type="match status" value="1"/>
</dbReference>
<dbReference type="FunFam" id="3.30.56.70:FF:000001">
    <property type="entry name" value="tRNA (guanine(26)-N(2))-dimethyltransferase"/>
    <property type="match status" value="1"/>
</dbReference>
<dbReference type="FunFam" id="3.40.50.150:FF:000272">
    <property type="entry name" value="tRNA (guanine(26)-N(2))-dimethyltransferase"/>
    <property type="match status" value="1"/>
</dbReference>
<dbReference type="Gene3D" id="3.30.56.70">
    <property type="entry name" value="N2,N2-dimethylguanosine tRNA methyltransferase, C-terminal domain"/>
    <property type="match status" value="1"/>
</dbReference>
<dbReference type="Gene3D" id="3.40.50.150">
    <property type="entry name" value="Vaccinia Virus protein VP39"/>
    <property type="match status" value="1"/>
</dbReference>
<dbReference type="HAMAP" id="MF_00290">
    <property type="entry name" value="tRNA_dimethyltr_TRM1"/>
    <property type="match status" value="1"/>
</dbReference>
<dbReference type="InterPro" id="IPR029063">
    <property type="entry name" value="SAM-dependent_MTases_sf"/>
</dbReference>
<dbReference type="InterPro" id="IPR002905">
    <property type="entry name" value="Trm1"/>
</dbReference>
<dbReference type="InterPro" id="IPR022923">
    <property type="entry name" value="TRM1_arc_bac"/>
</dbReference>
<dbReference type="InterPro" id="IPR042296">
    <property type="entry name" value="tRNA_met_Trm1_C"/>
</dbReference>
<dbReference type="NCBIfam" id="TIGR00308">
    <property type="entry name" value="TRM1"/>
    <property type="match status" value="1"/>
</dbReference>
<dbReference type="PANTHER" id="PTHR10631">
    <property type="entry name" value="N 2 ,N 2 -DIMETHYLGUANOSINE TRNA METHYLTRANSFERASE"/>
    <property type="match status" value="1"/>
</dbReference>
<dbReference type="PANTHER" id="PTHR10631:SF3">
    <property type="entry name" value="TRNA (GUANINE(26)-N(2))-DIMETHYLTRANSFERASE"/>
    <property type="match status" value="1"/>
</dbReference>
<dbReference type="Pfam" id="PF02005">
    <property type="entry name" value="TRM"/>
    <property type="match status" value="1"/>
</dbReference>
<dbReference type="SUPFAM" id="SSF53335">
    <property type="entry name" value="S-adenosyl-L-methionine-dependent methyltransferases"/>
    <property type="match status" value="1"/>
</dbReference>
<dbReference type="PROSITE" id="PS51626">
    <property type="entry name" value="SAM_MT_TRM1"/>
    <property type="match status" value="1"/>
</dbReference>
<organism>
    <name type="scientific">Pyrococcus horikoshii (strain ATCC 700860 / DSM 12428 / JCM 9974 / NBRC 100139 / OT-3)</name>
    <dbReference type="NCBI Taxonomy" id="70601"/>
    <lineage>
        <taxon>Archaea</taxon>
        <taxon>Methanobacteriati</taxon>
        <taxon>Methanobacteriota</taxon>
        <taxon>Thermococci</taxon>
        <taxon>Thermococcales</taxon>
        <taxon>Thermococcaceae</taxon>
        <taxon>Pyrococcus</taxon>
    </lineage>
</organism>
<keyword id="KW-0002">3D-structure</keyword>
<keyword id="KW-0489">Methyltransferase</keyword>
<keyword id="KW-0694">RNA-binding</keyword>
<keyword id="KW-0949">S-adenosyl-L-methionine</keyword>
<keyword id="KW-0808">Transferase</keyword>
<keyword id="KW-0819">tRNA processing</keyword>
<keyword id="KW-0820">tRNA-binding</keyword>
<sequence>MVNLELIEVQEGKAKILIPKAESIYDSPVFYNPRMALNRDIVVVLLNILNPKIVLDALSATGIRGIRFALETPAEEVWLNDISEDAYELMKRNVMLNFDGELRESKGRAILKGEKTIVINHDDANRLMAERHRYFHFIDLDPFGSPMEFLDTALRSAKRRGILGVTATDGAPLCGAHPRACLRKYLAVPLRGELCHEVGTRILVGVIARYAAKYDLGIDVILAYYKDHYFRAFVKLKDGARKGDETLEKLGYIYFDDKTGKFELEQGFLPTRPNAYGPVWLGPLKDEKIVSKMVKEAESLSLARKKQALKLLKMIDQELDIPLFYDTHAIGRRLKIETKKVEEIISALREQGYEATRTHFSPTGIKTSAPYEVFIETIKRI</sequence>